<accession>Q47JL9</accession>
<gene>
    <name evidence="1" type="primary">hslV</name>
    <name type="ordered locus">Daro_0203</name>
</gene>
<reference key="1">
    <citation type="journal article" date="2009" name="BMC Genomics">
        <title>Metabolic analysis of the soil microbe Dechloromonas aromatica str. RCB: indications of a surprisingly complex life-style and cryptic anaerobic pathways for aromatic degradation.</title>
        <authorList>
            <person name="Salinero K.K."/>
            <person name="Keller K."/>
            <person name="Feil W.S."/>
            <person name="Feil H."/>
            <person name="Trong S."/>
            <person name="Di Bartolo G."/>
            <person name="Lapidus A."/>
        </authorList>
    </citation>
    <scope>NUCLEOTIDE SEQUENCE [LARGE SCALE GENOMIC DNA]</scope>
    <source>
        <strain>RCB</strain>
    </source>
</reference>
<dbReference type="EC" id="3.4.25.2" evidence="1"/>
<dbReference type="EMBL" id="CP000089">
    <property type="protein sequence ID" value="AAZ44962.1"/>
    <property type="molecule type" value="Genomic_DNA"/>
</dbReference>
<dbReference type="SMR" id="Q47JL9"/>
<dbReference type="STRING" id="159087.Daro_0203"/>
<dbReference type="MEROPS" id="T01.006"/>
<dbReference type="KEGG" id="dar:Daro_0203"/>
<dbReference type="eggNOG" id="COG5405">
    <property type="taxonomic scope" value="Bacteria"/>
</dbReference>
<dbReference type="HOGENOM" id="CLU_093872_1_0_4"/>
<dbReference type="OrthoDB" id="9804884at2"/>
<dbReference type="GO" id="GO:0009376">
    <property type="term" value="C:HslUV protease complex"/>
    <property type="evidence" value="ECO:0007669"/>
    <property type="project" value="UniProtKB-UniRule"/>
</dbReference>
<dbReference type="GO" id="GO:0005839">
    <property type="term" value="C:proteasome core complex"/>
    <property type="evidence" value="ECO:0007669"/>
    <property type="project" value="InterPro"/>
</dbReference>
<dbReference type="GO" id="GO:0046872">
    <property type="term" value="F:metal ion binding"/>
    <property type="evidence" value="ECO:0007669"/>
    <property type="project" value="UniProtKB-KW"/>
</dbReference>
<dbReference type="GO" id="GO:0004298">
    <property type="term" value="F:threonine-type endopeptidase activity"/>
    <property type="evidence" value="ECO:0007669"/>
    <property type="project" value="UniProtKB-KW"/>
</dbReference>
<dbReference type="GO" id="GO:0051603">
    <property type="term" value="P:proteolysis involved in protein catabolic process"/>
    <property type="evidence" value="ECO:0007669"/>
    <property type="project" value="InterPro"/>
</dbReference>
<dbReference type="CDD" id="cd01913">
    <property type="entry name" value="protease_HslV"/>
    <property type="match status" value="1"/>
</dbReference>
<dbReference type="FunFam" id="3.60.20.10:FF:000002">
    <property type="entry name" value="ATP-dependent protease subunit HslV"/>
    <property type="match status" value="1"/>
</dbReference>
<dbReference type="Gene3D" id="3.60.20.10">
    <property type="entry name" value="Glutamine Phosphoribosylpyrophosphate, subunit 1, domain 1"/>
    <property type="match status" value="1"/>
</dbReference>
<dbReference type="HAMAP" id="MF_00248">
    <property type="entry name" value="HslV"/>
    <property type="match status" value="1"/>
</dbReference>
<dbReference type="InterPro" id="IPR022281">
    <property type="entry name" value="ATP-dep_Prtase_HsIV_su"/>
</dbReference>
<dbReference type="InterPro" id="IPR029055">
    <property type="entry name" value="Ntn_hydrolases_N"/>
</dbReference>
<dbReference type="InterPro" id="IPR001353">
    <property type="entry name" value="Proteasome_sua/b"/>
</dbReference>
<dbReference type="InterPro" id="IPR023333">
    <property type="entry name" value="Proteasome_suB-type"/>
</dbReference>
<dbReference type="NCBIfam" id="TIGR03692">
    <property type="entry name" value="ATP_dep_HslV"/>
    <property type="match status" value="1"/>
</dbReference>
<dbReference type="NCBIfam" id="NF003964">
    <property type="entry name" value="PRK05456.1"/>
    <property type="match status" value="1"/>
</dbReference>
<dbReference type="PANTHER" id="PTHR32194:SF0">
    <property type="entry name" value="ATP-DEPENDENT PROTEASE SUBUNIT HSLV"/>
    <property type="match status" value="1"/>
</dbReference>
<dbReference type="PANTHER" id="PTHR32194">
    <property type="entry name" value="METALLOPROTEASE TLDD"/>
    <property type="match status" value="1"/>
</dbReference>
<dbReference type="Pfam" id="PF00227">
    <property type="entry name" value="Proteasome"/>
    <property type="match status" value="1"/>
</dbReference>
<dbReference type="PIRSF" id="PIRSF039093">
    <property type="entry name" value="HslV"/>
    <property type="match status" value="1"/>
</dbReference>
<dbReference type="SUPFAM" id="SSF56235">
    <property type="entry name" value="N-terminal nucleophile aminohydrolases (Ntn hydrolases)"/>
    <property type="match status" value="1"/>
</dbReference>
<dbReference type="PROSITE" id="PS51476">
    <property type="entry name" value="PROTEASOME_BETA_2"/>
    <property type="match status" value="1"/>
</dbReference>
<organism>
    <name type="scientific">Dechloromonas aromatica (strain RCB)</name>
    <dbReference type="NCBI Taxonomy" id="159087"/>
    <lineage>
        <taxon>Bacteria</taxon>
        <taxon>Pseudomonadati</taxon>
        <taxon>Pseudomonadota</taxon>
        <taxon>Betaproteobacteria</taxon>
        <taxon>Rhodocyclales</taxon>
        <taxon>Azonexaceae</taxon>
        <taxon>Dechloromonas</taxon>
    </lineage>
</organism>
<name>HSLV_DECAR</name>
<proteinExistence type="inferred from homology"/>
<feature type="chain" id="PRO_1000012602" description="ATP-dependent protease subunit HslV">
    <location>
        <begin position="1"/>
        <end position="178"/>
    </location>
</feature>
<feature type="active site" evidence="1">
    <location>
        <position position="7"/>
    </location>
</feature>
<feature type="binding site" evidence="1">
    <location>
        <position position="162"/>
    </location>
    <ligand>
        <name>Na(+)</name>
        <dbReference type="ChEBI" id="CHEBI:29101"/>
    </ligand>
</feature>
<feature type="binding site" evidence="1">
    <location>
        <position position="165"/>
    </location>
    <ligand>
        <name>Na(+)</name>
        <dbReference type="ChEBI" id="CHEBI:29101"/>
    </ligand>
</feature>
<feature type="binding site" evidence="1">
    <location>
        <position position="168"/>
    </location>
    <ligand>
        <name>Na(+)</name>
        <dbReference type="ChEBI" id="CHEBI:29101"/>
    </ligand>
</feature>
<evidence type="ECO:0000255" key="1">
    <source>
        <dbReference type="HAMAP-Rule" id="MF_00248"/>
    </source>
</evidence>
<comment type="function">
    <text evidence="1">Protease subunit of a proteasome-like degradation complex believed to be a general protein degrading machinery.</text>
</comment>
<comment type="catalytic activity">
    <reaction evidence="1">
        <text>ATP-dependent cleavage of peptide bonds with broad specificity.</text>
        <dbReference type="EC" id="3.4.25.2"/>
    </reaction>
</comment>
<comment type="activity regulation">
    <text evidence="1">Allosterically activated by HslU binding.</text>
</comment>
<comment type="subunit">
    <text evidence="1">A double ring-shaped homohexamer of HslV is capped on each side by a ring-shaped HslU homohexamer. The assembly of the HslU/HslV complex is dependent on binding of ATP.</text>
</comment>
<comment type="subcellular location">
    <subcellularLocation>
        <location evidence="1">Cytoplasm</location>
    </subcellularLocation>
</comment>
<comment type="similarity">
    <text evidence="1">Belongs to the peptidase T1B family. HslV subfamily.</text>
</comment>
<keyword id="KW-0021">Allosteric enzyme</keyword>
<keyword id="KW-0963">Cytoplasm</keyword>
<keyword id="KW-0378">Hydrolase</keyword>
<keyword id="KW-0479">Metal-binding</keyword>
<keyword id="KW-0645">Protease</keyword>
<keyword id="KW-0915">Sodium</keyword>
<keyword id="KW-0888">Threonine protease</keyword>
<protein>
    <recommendedName>
        <fullName evidence="1">ATP-dependent protease subunit HslV</fullName>
        <ecNumber evidence="1">3.4.25.2</ecNumber>
    </recommendedName>
</protein>
<sequence>MEQYHGTTILSVRRGNSVAMGGDGQVTLGNIVIKATARKVRRLYNGRILAGFAGGTADAFTLFERFEAKLDKHQGNLLRSAVELAKDWRSDRALRRLEAMLSVADREVSLIITGNGDVLEPEQGIVAIGSGGSYAQSAARALLENTELAPRDIVTKSLEIAGDICIYTNRNFTLEVLE</sequence>